<gene>
    <name evidence="10 12" type="primary">Clic1</name>
</gene>
<keyword id="KW-0007">Acetylation</keyword>
<keyword id="KW-1003">Cell membrane</keyword>
<keyword id="KW-0868">Chloride</keyword>
<keyword id="KW-0869">Chloride channel</keyword>
<keyword id="KW-0963">Cytoplasm</keyword>
<keyword id="KW-0903">Direct protein sequencing</keyword>
<keyword id="KW-1015">Disulfide bond</keyword>
<keyword id="KW-0256">Endoplasmic reticulum</keyword>
<keyword id="KW-0407">Ion channel</keyword>
<keyword id="KW-0406">Ion transport</keyword>
<keyword id="KW-0472">Membrane</keyword>
<keyword id="KW-0539">Nucleus</keyword>
<keyword id="KW-0560">Oxidoreductase</keyword>
<keyword id="KW-0597">Phosphoprotein</keyword>
<keyword id="KW-1185">Reference proteome</keyword>
<keyword id="KW-0812">Transmembrane</keyword>
<keyword id="KW-1133">Transmembrane helix</keyword>
<keyword id="KW-0813">Transport</keyword>
<keyword id="KW-0851">Voltage-gated channel</keyword>
<reference evidence="10" key="1">
    <citation type="journal article" date="2004" name="Genome Res.">
        <title>The genomic sequence and comparative analysis of the rat major histocompatibility complex.</title>
        <authorList>
            <person name="Hurt P."/>
            <person name="Walter L."/>
            <person name="Sudbrak R."/>
            <person name="Klages S."/>
            <person name="Mueller I."/>
            <person name="Shiina T."/>
            <person name="Inoko H."/>
            <person name="Lehrach H."/>
            <person name="Guenther E."/>
            <person name="Reinhardt R."/>
            <person name="Himmelbauer H."/>
        </authorList>
    </citation>
    <scope>NUCLEOTIDE SEQUENCE [LARGE SCALE GENOMIC DNA]</scope>
    <source>
        <strain evidence="10">Brown Norway</strain>
    </source>
</reference>
<reference evidence="8 11" key="2">
    <citation type="submission" date="2005-07" db="EMBL/GenBank/DDBJ databases">
        <authorList>
            <person name="Mural R.J."/>
            <person name="Adams M.D."/>
            <person name="Myers E.W."/>
            <person name="Smith H.O."/>
            <person name="Venter J.C."/>
        </authorList>
    </citation>
    <scope>NUCLEOTIDE SEQUENCE [LARGE SCALE GENOMIC DNA]</scope>
    <source>
        <strain evidence="11">Brown Norway</strain>
    </source>
</reference>
<reference evidence="9" key="3">
    <citation type="journal article" date="2004" name="Genome Res.">
        <title>The status, quality, and expansion of the NIH full-length cDNA project: the Mammalian Gene Collection (MGC).</title>
        <authorList>
            <consortium name="The MGC Project Team"/>
        </authorList>
    </citation>
    <scope>NUCLEOTIDE SEQUENCE [LARGE SCALE MRNA]</scope>
    <source>
        <tissue evidence="9">Prostate</tissue>
    </source>
</reference>
<reference evidence="8 11" key="4">
    <citation type="submission" date="2009-06" db="UniProtKB">
        <authorList>
            <person name="Bienvenut W.V."/>
            <person name="von Kriegsheim A."/>
            <person name="Kolch W."/>
        </authorList>
    </citation>
    <scope>PROTEIN SEQUENCE OF 2-13 AND 120-131</scope>
    <scope>CLEAVAGE OF INITIATOR METHIONINE</scope>
    <scope>ACETYLATION AT ALA-2</scope>
    <scope>IDENTIFICATION BY MASS SPECTROMETRY</scope>
    <source>
        <tissue>Fibroblast</tissue>
    </source>
</reference>
<reference evidence="8 11" key="5">
    <citation type="submission" date="2008-12" db="UniProtKB">
        <authorList>
            <person name="Maurya D.K."/>
            <person name="Bhargava P."/>
        </authorList>
    </citation>
    <scope>IDENTIFICATION BY MASS SPECTROMETRY</scope>
</reference>
<reference key="6">
    <citation type="journal article" date="2012" name="Nat. Commun.">
        <title>Quantitative maps of protein phosphorylation sites across 14 different rat organs and tissues.</title>
        <authorList>
            <person name="Lundby A."/>
            <person name="Secher A."/>
            <person name="Lage K."/>
            <person name="Nordsborg N.B."/>
            <person name="Dmytriyev A."/>
            <person name="Lundby C."/>
            <person name="Olsen J.V."/>
        </authorList>
    </citation>
    <scope>IDENTIFICATION BY MASS SPECTROMETRY [LARGE SCALE ANALYSIS]</scope>
</reference>
<reference evidence="8" key="7">
    <citation type="journal article" date="2016" name="Mitochondrion">
        <title>Molecular identity of cardiac mitochondrial chloride intracellular channel proteins.</title>
        <authorList>
            <person name="Ponnalagu D."/>
            <person name="Gururaja Rao S."/>
            <person name="Farber J."/>
            <person name="Xin W."/>
            <person name="Hussain A.T."/>
            <person name="Shah K."/>
            <person name="Tanda S."/>
            <person name="Berryman M."/>
            <person name="Edwards J.C."/>
            <person name="Singh H."/>
        </authorList>
    </citation>
    <scope>SUBCELLULAR LOCATION</scope>
    <scope>TISSUE SPECIFICITY</scope>
</reference>
<comment type="function">
    <text evidence="2">In the soluble state, catalyzes glutaredoxin-like thiol disulfide exchange reactions with reduced glutathione as electron donor. Reduces selenite and dehydroascorbate and may act as an antioxidant during oxidative stress response (By similarity). Can insert into membranes and form voltage-dependent multi-ion conductive channels. Membrane insertion seems to be redox-regulated and may occur only under oxidizing conditions. Involved in regulation of the cell cycle (By similarity).</text>
</comment>
<comment type="catalytic activity">
    <reaction evidence="2">
        <text>L-dehydroascorbate + 2 glutathione = glutathione disulfide + L-ascorbate</text>
        <dbReference type="Rhea" id="RHEA:24424"/>
        <dbReference type="ChEBI" id="CHEBI:38290"/>
        <dbReference type="ChEBI" id="CHEBI:57925"/>
        <dbReference type="ChEBI" id="CHEBI:58297"/>
        <dbReference type="ChEBI" id="CHEBI:58539"/>
        <dbReference type="EC" id="1.8.5.1"/>
    </reaction>
    <physiologicalReaction direction="left-to-right" evidence="2">
        <dbReference type="Rhea" id="RHEA:24425"/>
    </physiologicalReaction>
</comment>
<comment type="catalytic activity">
    <reaction evidence="2">
        <text>chloride(in) = chloride(out)</text>
        <dbReference type="Rhea" id="RHEA:29823"/>
        <dbReference type="ChEBI" id="CHEBI:17996"/>
    </reaction>
</comment>
<comment type="catalytic activity">
    <reaction evidence="2">
        <text>iodide(out) = iodide(in)</text>
        <dbReference type="Rhea" id="RHEA:66324"/>
        <dbReference type="ChEBI" id="CHEBI:16382"/>
    </reaction>
</comment>
<comment type="catalytic activity">
    <reaction evidence="2">
        <text>thiocyanate(in) = thiocyanate(out)</text>
        <dbReference type="Rhea" id="RHEA:75347"/>
        <dbReference type="ChEBI" id="CHEBI:18022"/>
    </reaction>
</comment>
<comment type="catalytic activity">
    <reaction evidence="2">
        <text>nitrate(in) = nitrate(out)</text>
        <dbReference type="Rhea" id="RHEA:34923"/>
        <dbReference type="ChEBI" id="CHEBI:17632"/>
    </reaction>
</comment>
<comment type="catalytic activity">
    <reaction evidence="2">
        <text>bromide(in) = bromide(out)</text>
        <dbReference type="Rhea" id="RHEA:75383"/>
        <dbReference type="ChEBI" id="CHEBI:15858"/>
    </reaction>
</comment>
<comment type="catalytic activity">
    <reaction evidence="2">
        <text>fluoride(in) = fluoride(out)</text>
        <dbReference type="Rhea" id="RHEA:76159"/>
        <dbReference type="ChEBI" id="CHEBI:17051"/>
    </reaction>
</comment>
<comment type="subunit">
    <text evidence="1">Monomer. Homodimer (in vitro). Interacts with TRAPPC2. Dimerization requires a conformation change that leads to the exposure of a large hydrophobic surface. In vivo, this may lead to membrane insertion (By similarity).</text>
</comment>
<comment type="subcellular location">
    <subcellularLocation>
        <location evidence="2">Nucleus</location>
    </subcellularLocation>
    <subcellularLocation>
        <location evidence="2">Nucleus membrane</location>
        <topology evidence="2">Single-pass membrane protein</topology>
    </subcellularLocation>
    <subcellularLocation>
        <location evidence="2">Cytoplasm</location>
    </subcellularLocation>
    <subcellularLocation>
        <location evidence="2">Cell membrane</location>
        <topology evidence="2">Single-pass membrane protein</topology>
    </subcellularLocation>
    <subcellularLocation>
        <location evidence="6">Endoplasmic reticulum</location>
    </subcellularLocation>
    <text evidence="2 6">Mostly in the nucleus including in the nuclear membrane. Small amount in the cytoplasm and the plasma membrane. Exists both as soluble cytoplasmic protein and as membrane protein with probably a single transmembrane domain. Might not be present in the nucleus of cardiac cells.</text>
</comment>
<comment type="tissue specificity">
    <text evidence="6">Expressed in neonatal and adult cardiomyocytes (at protein level).</text>
</comment>
<comment type="domain">
    <text evidence="2">The active G-site contains a monothiol Cys-X-X-Ser motif which mediates glutathione-dependent redox catalysis.</text>
</comment>
<comment type="domain">
    <text evidence="2">Members of this family may change from a globular, soluble state to a state where the N-terminal domain is inserted into the membrane and functions as a channel. The redox status of the active cysteine in Cys-X-X-Cys/Ser motif likely determines the capacity to adopt a soluble or membrane-inserted state. A conformation change of the N-terminal domain is thought to expose hydrophobic surfaces that trigger membrane insertion.</text>
</comment>
<comment type="similarity">
    <text evidence="4">Belongs to the chloride channel CLIC family.</text>
</comment>
<proteinExistence type="evidence at protein level"/>
<name>CLIC1_RAT</name>
<organism>
    <name type="scientific">Rattus norvegicus</name>
    <name type="common">Rat</name>
    <dbReference type="NCBI Taxonomy" id="10116"/>
    <lineage>
        <taxon>Eukaryota</taxon>
        <taxon>Metazoa</taxon>
        <taxon>Chordata</taxon>
        <taxon>Craniata</taxon>
        <taxon>Vertebrata</taxon>
        <taxon>Euteleostomi</taxon>
        <taxon>Mammalia</taxon>
        <taxon>Eutheria</taxon>
        <taxon>Euarchontoglires</taxon>
        <taxon>Glires</taxon>
        <taxon>Rodentia</taxon>
        <taxon>Myomorpha</taxon>
        <taxon>Muroidea</taxon>
        <taxon>Muridae</taxon>
        <taxon>Murinae</taxon>
        <taxon>Rattus</taxon>
    </lineage>
</organism>
<evidence type="ECO:0000250" key="1"/>
<evidence type="ECO:0000250" key="2">
    <source>
        <dbReference type="UniProtKB" id="O00299"/>
    </source>
</evidence>
<evidence type="ECO:0000250" key="3">
    <source>
        <dbReference type="UniProtKB" id="Q9Z1Q5"/>
    </source>
</evidence>
<evidence type="ECO:0000255" key="4"/>
<evidence type="ECO:0000255" key="5">
    <source>
        <dbReference type="PROSITE-ProRule" id="PRU00685"/>
    </source>
</evidence>
<evidence type="ECO:0000269" key="6">
    <source>
    </source>
</evidence>
<evidence type="ECO:0000269" key="7">
    <source ref="4"/>
</evidence>
<evidence type="ECO:0000305" key="8"/>
<evidence type="ECO:0000312" key="9">
    <source>
        <dbReference type="EMBL" id="AAH99823.1"/>
    </source>
</evidence>
<evidence type="ECO:0000312" key="10">
    <source>
        <dbReference type="EMBL" id="CAE83985.1"/>
    </source>
</evidence>
<evidence type="ECO:0000312" key="11">
    <source>
        <dbReference type="EMBL" id="EDL83493.1"/>
    </source>
</evidence>
<evidence type="ECO:0000312" key="12">
    <source>
        <dbReference type="RGD" id="1303043"/>
    </source>
</evidence>
<protein>
    <recommendedName>
        <fullName evidence="2 10">Chloride intracellular channel protein 1</fullName>
    </recommendedName>
    <alternativeName>
        <fullName evidence="2">Glutaredoxin-like oxidoreductase CLIC1</fullName>
        <ecNumber evidence="2">1.8.-.-</ecNumber>
    </alternativeName>
    <alternativeName>
        <fullName evidence="2">Glutathione-dependent dehydroascorbate reductase CLIC1</fullName>
        <ecNumber evidence="2">1.8.5.1</ecNumber>
    </alternativeName>
</protein>
<sequence length="241" mass="26981">MAEEQPQVELFVKAGSDGAKIGNCPFSQRLFMVLWLKGVTFNVTTVDTKRRTETVQKLCPGGQLPFLLYGTEVHTDTNKIEEFLEAVLCPPRYPKLAALNPESNTSGLDIFAKFSAYIKNSNPALNDNLEKGLLKALKVLDNYLTSPLPEEVDETSAEDEGISQRKFLDGNELTLADCNLLPKLHIVQVVCKKYRGFTIPEAFRGVHRYLSNAYAREEFASTCPDDEEIELAYEQVARALK</sequence>
<accession>Q6MG61</accession>
<feature type="initiator methionine" description="Removed" evidence="7">
    <location>
        <position position="1"/>
    </location>
</feature>
<feature type="chain" id="PRO_0000365103" description="Chloride intracellular channel protein 1" evidence="2">
    <location>
        <begin position="2"/>
        <end position="241"/>
    </location>
</feature>
<feature type="transmembrane region" description="Helical; Note=After insertion into the membrane" evidence="4">
    <location>
        <begin position="26"/>
        <end position="46"/>
    </location>
</feature>
<feature type="domain" description="GST C-terminal" evidence="5">
    <location>
        <begin position="93"/>
        <end position="233"/>
    </location>
</feature>
<feature type="region of interest" description="Required for insertion into the membrane" evidence="1">
    <location>
        <begin position="2"/>
        <end position="90"/>
    </location>
</feature>
<feature type="short sequence motif" description="G-site" evidence="2">
    <location>
        <begin position="24"/>
        <end position="27"/>
    </location>
</feature>
<feature type="modified residue" description="N-acetylalanine" evidence="7">
    <location>
        <position position="2"/>
    </location>
</feature>
<feature type="modified residue" description="N6-acetyllysine" evidence="2">
    <location>
        <position position="13"/>
    </location>
</feature>
<feature type="modified residue" description="N6-acetyllysine" evidence="2">
    <location>
        <position position="119"/>
    </location>
</feature>
<feature type="modified residue" description="Phosphoserine" evidence="2">
    <location>
        <position position="121"/>
    </location>
</feature>
<feature type="modified residue" description="N6-acetyllysine" evidence="2">
    <location>
        <position position="131"/>
    </location>
</feature>
<feature type="modified residue" description="Phosphoserine" evidence="2">
    <location>
        <position position="156"/>
    </location>
</feature>
<feature type="modified residue" description="Phosphoserine" evidence="2">
    <location>
        <position position="211"/>
    </location>
</feature>
<feature type="modified residue" description="Phosphotyrosine" evidence="3">
    <location>
        <position position="233"/>
    </location>
</feature>
<feature type="disulfide bond" evidence="1">
    <location>
        <begin position="24"/>
        <end position="59"/>
    </location>
</feature>
<dbReference type="EC" id="1.8.-.-" evidence="2"/>
<dbReference type="EC" id="1.8.5.1" evidence="2"/>
<dbReference type="EMBL" id="BX883045">
    <property type="protein sequence ID" value="CAE83985.1"/>
    <property type="molecule type" value="Genomic_DNA"/>
</dbReference>
<dbReference type="EMBL" id="CH474121">
    <property type="protein sequence ID" value="EDL83493.1"/>
    <property type="molecule type" value="Genomic_DNA"/>
</dbReference>
<dbReference type="EMBL" id="BC099823">
    <property type="protein sequence ID" value="AAH99823.1"/>
    <property type="molecule type" value="mRNA"/>
</dbReference>
<dbReference type="RefSeq" id="NP_001002807.1">
    <property type="nucleotide sequence ID" value="NM_001002807.2"/>
</dbReference>
<dbReference type="SMR" id="Q6MG61"/>
<dbReference type="FunCoup" id="Q6MG61">
    <property type="interactions" value="1824"/>
</dbReference>
<dbReference type="STRING" id="10116.ENSRNOP00000060240"/>
<dbReference type="GlyGen" id="Q6MG61">
    <property type="glycosylation" value="1 site, 1 O-linked glycan (1 site)"/>
</dbReference>
<dbReference type="iPTMnet" id="Q6MG61"/>
<dbReference type="PhosphoSitePlus" id="Q6MG61"/>
<dbReference type="jPOST" id="Q6MG61"/>
<dbReference type="PaxDb" id="10116-ENSRNOP00000060240"/>
<dbReference type="GeneID" id="406864"/>
<dbReference type="KEGG" id="rno:406864"/>
<dbReference type="UCSC" id="RGD:1303043">
    <property type="organism name" value="rat"/>
</dbReference>
<dbReference type="AGR" id="RGD:1303043"/>
<dbReference type="CTD" id="1192"/>
<dbReference type="RGD" id="1303043">
    <property type="gene designation" value="Clic1"/>
</dbReference>
<dbReference type="VEuPathDB" id="HostDB:ENSRNOG00000029682"/>
<dbReference type="eggNOG" id="KOG1422">
    <property type="taxonomic scope" value="Eukaryota"/>
</dbReference>
<dbReference type="HOGENOM" id="CLU_061051_1_0_1"/>
<dbReference type="InParanoid" id="Q6MG61"/>
<dbReference type="OrthoDB" id="5498at9989"/>
<dbReference type="PhylomeDB" id="Q6MG61"/>
<dbReference type="TreeFam" id="TF315438"/>
<dbReference type="PRO" id="PR:Q6MG61"/>
<dbReference type="Proteomes" id="UP000002494">
    <property type="component" value="Chromosome 20"/>
</dbReference>
<dbReference type="Proteomes" id="UP000234681">
    <property type="component" value="Chromosome 20"/>
</dbReference>
<dbReference type="Bgee" id="ENSRNOG00000029682">
    <property type="expression patterns" value="Expressed in ileum and 19 other cell types or tissues"/>
</dbReference>
<dbReference type="GO" id="GO:0034707">
    <property type="term" value="C:chloride channel complex"/>
    <property type="evidence" value="ECO:0007669"/>
    <property type="project" value="UniProtKB-KW"/>
</dbReference>
<dbReference type="GO" id="GO:0005737">
    <property type="term" value="C:cytoplasm"/>
    <property type="evidence" value="ECO:0000250"/>
    <property type="project" value="UniProtKB"/>
</dbReference>
<dbReference type="GO" id="GO:0005783">
    <property type="term" value="C:endoplasmic reticulum"/>
    <property type="evidence" value="ECO:0007669"/>
    <property type="project" value="UniProtKB-SubCell"/>
</dbReference>
<dbReference type="GO" id="GO:0070062">
    <property type="term" value="C:extracellular exosome"/>
    <property type="evidence" value="ECO:0000266"/>
    <property type="project" value="RGD"/>
</dbReference>
<dbReference type="GO" id="GO:0016020">
    <property type="term" value="C:membrane"/>
    <property type="evidence" value="ECO:0000318"/>
    <property type="project" value="GO_Central"/>
</dbReference>
<dbReference type="GO" id="GO:0031966">
    <property type="term" value="C:mitochondrial membrane"/>
    <property type="evidence" value="ECO:0000314"/>
    <property type="project" value="FlyBase"/>
</dbReference>
<dbReference type="GO" id="GO:0005739">
    <property type="term" value="C:mitochondrion"/>
    <property type="evidence" value="ECO:0000266"/>
    <property type="project" value="RGD"/>
</dbReference>
<dbReference type="GO" id="GO:0005635">
    <property type="term" value="C:nuclear envelope"/>
    <property type="evidence" value="ECO:0000266"/>
    <property type="project" value="RGD"/>
</dbReference>
<dbReference type="GO" id="GO:0031965">
    <property type="term" value="C:nuclear membrane"/>
    <property type="evidence" value="ECO:0007669"/>
    <property type="project" value="UniProtKB-SubCell"/>
</dbReference>
<dbReference type="GO" id="GO:0005634">
    <property type="term" value="C:nucleus"/>
    <property type="evidence" value="ECO:0000266"/>
    <property type="project" value="RGD"/>
</dbReference>
<dbReference type="GO" id="GO:0048471">
    <property type="term" value="C:perinuclear region of cytoplasm"/>
    <property type="evidence" value="ECO:0000266"/>
    <property type="project" value="RGD"/>
</dbReference>
<dbReference type="GO" id="GO:0005886">
    <property type="term" value="C:plasma membrane"/>
    <property type="evidence" value="ECO:0007669"/>
    <property type="project" value="UniProtKB-SubCell"/>
</dbReference>
<dbReference type="GO" id="GO:0005254">
    <property type="term" value="F:chloride channel activity"/>
    <property type="evidence" value="ECO:0000266"/>
    <property type="project" value="RGD"/>
</dbReference>
<dbReference type="GO" id="GO:0016491">
    <property type="term" value="F:oxidoreductase activity"/>
    <property type="evidence" value="ECO:0007669"/>
    <property type="project" value="UniProtKB-KW"/>
</dbReference>
<dbReference type="GO" id="GO:0005247">
    <property type="term" value="F:voltage-gated chloride channel activity"/>
    <property type="evidence" value="ECO:0000304"/>
    <property type="project" value="RGD"/>
</dbReference>
<dbReference type="GO" id="GO:0006821">
    <property type="term" value="P:chloride transport"/>
    <property type="evidence" value="ECO:0000266"/>
    <property type="project" value="RGD"/>
</dbReference>
<dbReference type="GO" id="GO:0045669">
    <property type="term" value="P:positive regulation of osteoblast differentiation"/>
    <property type="evidence" value="ECO:0000266"/>
    <property type="project" value="RGD"/>
</dbReference>
<dbReference type="GO" id="GO:0051881">
    <property type="term" value="P:regulation of mitochondrial membrane potential"/>
    <property type="evidence" value="ECO:0000266"/>
    <property type="project" value="RGD"/>
</dbReference>
<dbReference type="CDD" id="cd10300">
    <property type="entry name" value="GST_C_CLIC1"/>
    <property type="match status" value="1"/>
</dbReference>
<dbReference type="CDD" id="cd03061">
    <property type="entry name" value="GST_N_CLIC"/>
    <property type="match status" value="1"/>
</dbReference>
<dbReference type="FunFam" id="1.20.1050.10:FF:000001">
    <property type="entry name" value="Chloride intracellular channel 2"/>
    <property type="match status" value="1"/>
</dbReference>
<dbReference type="FunFam" id="3.40.30.10:FF:000129">
    <property type="entry name" value="Chloride intracellular channel protein 1"/>
    <property type="match status" value="1"/>
</dbReference>
<dbReference type="Gene3D" id="1.20.1050.10">
    <property type="match status" value="1"/>
</dbReference>
<dbReference type="Gene3D" id="3.40.30.10">
    <property type="entry name" value="Glutaredoxin"/>
    <property type="match status" value="1"/>
</dbReference>
<dbReference type="InterPro" id="IPR002946">
    <property type="entry name" value="CLIC"/>
</dbReference>
<dbReference type="InterPro" id="IPR030259">
    <property type="entry name" value="CLIC-1_C"/>
</dbReference>
<dbReference type="InterPro" id="IPR053823">
    <property type="entry name" value="CLIC_N"/>
</dbReference>
<dbReference type="InterPro" id="IPR010987">
    <property type="entry name" value="Glutathione-S-Trfase_C-like"/>
</dbReference>
<dbReference type="InterPro" id="IPR036282">
    <property type="entry name" value="Glutathione-S-Trfase_C_sf"/>
</dbReference>
<dbReference type="InterPro" id="IPR040079">
    <property type="entry name" value="Glutathione_S-Trfase"/>
</dbReference>
<dbReference type="InterPro" id="IPR036249">
    <property type="entry name" value="Thioredoxin-like_sf"/>
</dbReference>
<dbReference type="NCBIfam" id="TIGR00862">
    <property type="entry name" value="O-ClC"/>
    <property type="match status" value="1"/>
</dbReference>
<dbReference type="PANTHER" id="PTHR45476:SF2">
    <property type="entry name" value="CHLORIDE INTRACELLULAR CHANNEL PROTEIN"/>
    <property type="match status" value="1"/>
</dbReference>
<dbReference type="PANTHER" id="PTHR45476">
    <property type="entry name" value="CHLORIDE INTRACELLULAR CHANNEL PROTEIN 6-RELATED"/>
    <property type="match status" value="1"/>
</dbReference>
<dbReference type="Pfam" id="PF22441">
    <property type="entry name" value="CLIC-like_N"/>
    <property type="match status" value="1"/>
</dbReference>
<dbReference type="Pfam" id="PF13410">
    <property type="entry name" value="GST_C_2"/>
    <property type="match status" value="1"/>
</dbReference>
<dbReference type="PRINTS" id="PR01263">
    <property type="entry name" value="INTCLCHANNEL"/>
</dbReference>
<dbReference type="SFLD" id="SFLDS00019">
    <property type="entry name" value="Glutathione_Transferase_(cytos"/>
    <property type="match status" value="1"/>
</dbReference>
<dbReference type="SFLD" id="SFLDG00358">
    <property type="entry name" value="Main_(cytGST)"/>
    <property type="match status" value="1"/>
</dbReference>
<dbReference type="SUPFAM" id="SSF47616">
    <property type="entry name" value="GST C-terminal domain-like"/>
    <property type="match status" value="1"/>
</dbReference>
<dbReference type="SUPFAM" id="SSF52833">
    <property type="entry name" value="Thioredoxin-like"/>
    <property type="match status" value="1"/>
</dbReference>
<dbReference type="PROSITE" id="PS50405">
    <property type="entry name" value="GST_CTER"/>
    <property type="match status" value="1"/>
</dbReference>